<proteinExistence type="inferred from homology"/>
<protein>
    <recommendedName>
        <fullName evidence="1">Large ribosomal subunit protein bL28</fullName>
    </recommendedName>
    <alternativeName>
        <fullName evidence="2">50S ribosomal protein L28</fullName>
    </alternativeName>
</protein>
<evidence type="ECO:0000255" key="1">
    <source>
        <dbReference type="HAMAP-Rule" id="MF_00373"/>
    </source>
</evidence>
<evidence type="ECO:0000305" key="2"/>
<comment type="similarity">
    <text evidence="1">Belongs to the bacterial ribosomal protein bL28 family.</text>
</comment>
<feature type="chain" id="PRO_1000072134" description="Large ribosomal subunit protein bL28">
    <location>
        <begin position="1"/>
        <end position="73"/>
    </location>
</feature>
<keyword id="KW-1185">Reference proteome</keyword>
<keyword id="KW-0687">Ribonucleoprotein</keyword>
<keyword id="KW-0689">Ribosomal protein</keyword>
<organism>
    <name type="scientific">Fervidobacterium nodosum (strain ATCC 35602 / DSM 5306 / Rt17-B1)</name>
    <dbReference type="NCBI Taxonomy" id="381764"/>
    <lineage>
        <taxon>Bacteria</taxon>
        <taxon>Thermotogati</taxon>
        <taxon>Thermotogota</taxon>
        <taxon>Thermotogae</taxon>
        <taxon>Thermotogales</taxon>
        <taxon>Fervidobacteriaceae</taxon>
        <taxon>Fervidobacterium</taxon>
    </lineage>
</organism>
<reference key="1">
    <citation type="submission" date="2007-07" db="EMBL/GenBank/DDBJ databases">
        <title>Complete sequence of Fervidobacterium nodosum Rt17-B1.</title>
        <authorList>
            <consortium name="US DOE Joint Genome Institute"/>
            <person name="Copeland A."/>
            <person name="Lucas S."/>
            <person name="Lapidus A."/>
            <person name="Barry K."/>
            <person name="Glavina del Rio T."/>
            <person name="Dalin E."/>
            <person name="Tice H."/>
            <person name="Pitluck S."/>
            <person name="Saunders E."/>
            <person name="Brettin T."/>
            <person name="Bruce D."/>
            <person name="Detter J.C."/>
            <person name="Han C."/>
            <person name="Schmutz J."/>
            <person name="Larimer F."/>
            <person name="Land M."/>
            <person name="Hauser L."/>
            <person name="Kyrpides N."/>
            <person name="Mikhailova N."/>
            <person name="Nelson K."/>
            <person name="Gogarten J.P."/>
            <person name="Noll K."/>
            <person name="Richardson P."/>
        </authorList>
    </citation>
    <scope>NUCLEOTIDE SEQUENCE [LARGE SCALE GENOMIC DNA]</scope>
    <source>
        <strain>ATCC 35602 / DSM 5306 / Rt17-B1</strain>
    </source>
</reference>
<name>RL28_FERNB</name>
<sequence>MAKCEICGKEPRAGKNVSHSNRHTNRWFKPNVQKVRVLLDDGTVKRMNVCTSCLKAGKVRRYVSKSQSVALEA</sequence>
<gene>
    <name evidence="1" type="primary">rpmB</name>
    <name type="ordered locus">Fnod_1024</name>
</gene>
<accession>A7HLU0</accession>
<dbReference type="EMBL" id="CP000771">
    <property type="protein sequence ID" value="ABS60873.1"/>
    <property type="molecule type" value="Genomic_DNA"/>
</dbReference>
<dbReference type="RefSeq" id="WP_011994187.1">
    <property type="nucleotide sequence ID" value="NC_009718.1"/>
</dbReference>
<dbReference type="SMR" id="A7HLU0"/>
<dbReference type="STRING" id="381764.Fnod_1024"/>
<dbReference type="KEGG" id="fno:Fnod_1024"/>
<dbReference type="eggNOG" id="COG0227">
    <property type="taxonomic scope" value="Bacteria"/>
</dbReference>
<dbReference type="HOGENOM" id="CLU_064548_7_0_0"/>
<dbReference type="OrthoDB" id="9805609at2"/>
<dbReference type="Proteomes" id="UP000002415">
    <property type="component" value="Chromosome"/>
</dbReference>
<dbReference type="GO" id="GO:1990904">
    <property type="term" value="C:ribonucleoprotein complex"/>
    <property type="evidence" value="ECO:0007669"/>
    <property type="project" value="UniProtKB-KW"/>
</dbReference>
<dbReference type="GO" id="GO:0005840">
    <property type="term" value="C:ribosome"/>
    <property type="evidence" value="ECO:0007669"/>
    <property type="project" value="UniProtKB-KW"/>
</dbReference>
<dbReference type="GO" id="GO:0003735">
    <property type="term" value="F:structural constituent of ribosome"/>
    <property type="evidence" value="ECO:0007669"/>
    <property type="project" value="InterPro"/>
</dbReference>
<dbReference type="GO" id="GO:0006412">
    <property type="term" value="P:translation"/>
    <property type="evidence" value="ECO:0007669"/>
    <property type="project" value="UniProtKB-UniRule"/>
</dbReference>
<dbReference type="Gene3D" id="2.30.170.40">
    <property type="entry name" value="Ribosomal protein L28/L24"/>
    <property type="match status" value="1"/>
</dbReference>
<dbReference type="HAMAP" id="MF_00373">
    <property type="entry name" value="Ribosomal_bL28"/>
    <property type="match status" value="1"/>
</dbReference>
<dbReference type="InterPro" id="IPR050096">
    <property type="entry name" value="Bacterial_rp_bL28"/>
</dbReference>
<dbReference type="InterPro" id="IPR026569">
    <property type="entry name" value="Ribosomal_bL28"/>
</dbReference>
<dbReference type="InterPro" id="IPR034704">
    <property type="entry name" value="Ribosomal_bL28/bL31-like_sf"/>
</dbReference>
<dbReference type="InterPro" id="IPR001383">
    <property type="entry name" value="Ribosomal_bL28_bact-type"/>
</dbReference>
<dbReference type="InterPro" id="IPR037147">
    <property type="entry name" value="Ribosomal_bL28_sf"/>
</dbReference>
<dbReference type="NCBIfam" id="TIGR00009">
    <property type="entry name" value="L28"/>
    <property type="match status" value="1"/>
</dbReference>
<dbReference type="PANTHER" id="PTHR39080">
    <property type="entry name" value="50S RIBOSOMAL PROTEIN L28"/>
    <property type="match status" value="1"/>
</dbReference>
<dbReference type="PANTHER" id="PTHR39080:SF1">
    <property type="entry name" value="LARGE RIBOSOMAL SUBUNIT PROTEIN BL28A"/>
    <property type="match status" value="1"/>
</dbReference>
<dbReference type="Pfam" id="PF00830">
    <property type="entry name" value="Ribosomal_L28"/>
    <property type="match status" value="1"/>
</dbReference>
<dbReference type="SUPFAM" id="SSF143800">
    <property type="entry name" value="L28p-like"/>
    <property type="match status" value="1"/>
</dbReference>